<name>RL15_NITV4</name>
<reference key="1">
    <citation type="journal article" date="2009" name="Environ. Microbiol.">
        <title>Contribution of mobile genetic elements to Desulfovibrio vulgaris genome plasticity.</title>
        <authorList>
            <person name="Walker C.B."/>
            <person name="Stolyar S."/>
            <person name="Chivian D."/>
            <person name="Pinel N."/>
            <person name="Gabster J.A."/>
            <person name="Dehal P.S."/>
            <person name="He Z."/>
            <person name="Yang Z.K."/>
            <person name="Yen H.C."/>
            <person name="Zhou J."/>
            <person name="Wall J.D."/>
            <person name="Hazen T.C."/>
            <person name="Arkin A.P."/>
            <person name="Stahl D.A."/>
        </authorList>
    </citation>
    <scope>NUCLEOTIDE SEQUENCE [LARGE SCALE GENOMIC DNA]</scope>
    <source>
        <strain>DP4</strain>
    </source>
</reference>
<protein>
    <recommendedName>
        <fullName evidence="1">Large ribosomal subunit protein uL15</fullName>
    </recommendedName>
    <alternativeName>
        <fullName evidence="3">50S ribosomal protein L15</fullName>
    </alternativeName>
</protein>
<proteinExistence type="inferred from homology"/>
<feature type="chain" id="PRO_1000054457" description="Large ribosomal subunit protein uL15">
    <location>
        <begin position="1"/>
        <end position="148"/>
    </location>
</feature>
<feature type="region of interest" description="Disordered" evidence="2">
    <location>
        <begin position="1"/>
        <end position="57"/>
    </location>
</feature>
<feature type="compositionally biased region" description="Gly residues" evidence="2">
    <location>
        <begin position="21"/>
        <end position="35"/>
    </location>
</feature>
<feature type="compositionally biased region" description="Gly residues" evidence="2">
    <location>
        <begin position="42"/>
        <end position="52"/>
    </location>
</feature>
<keyword id="KW-0687">Ribonucleoprotein</keyword>
<keyword id="KW-0689">Ribosomal protein</keyword>
<keyword id="KW-0694">RNA-binding</keyword>
<keyword id="KW-0699">rRNA-binding</keyword>
<comment type="function">
    <text evidence="1">Binds to the 23S rRNA.</text>
</comment>
<comment type="subunit">
    <text evidence="1">Part of the 50S ribosomal subunit.</text>
</comment>
<comment type="similarity">
    <text evidence="1">Belongs to the universal ribosomal protein uL15 family.</text>
</comment>
<organism>
    <name type="scientific">Nitratidesulfovibrio vulgaris (strain DP4)</name>
    <name type="common">Desulfovibrio vulgaris</name>
    <dbReference type="NCBI Taxonomy" id="391774"/>
    <lineage>
        <taxon>Bacteria</taxon>
        <taxon>Pseudomonadati</taxon>
        <taxon>Thermodesulfobacteriota</taxon>
        <taxon>Desulfovibrionia</taxon>
        <taxon>Desulfovibrionales</taxon>
        <taxon>Desulfovibrionaceae</taxon>
        <taxon>Nitratidesulfovibrio</taxon>
    </lineage>
</organism>
<sequence>MRLHDLYPFPEERKTRKRVGRGSGSGLGCTSGKGNKGQNARAGGGVRPGFEGGQMPLQRRLPKRGFKNMFAVKYEVINLARLLAAFEGKAEITLDDIYDRGLCSLGSAVKILGEGDVTTAIKVEAHKFSASAVEKIRNAGGEAKALEG</sequence>
<evidence type="ECO:0000255" key="1">
    <source>
        <dbReference type="HAMAP-Rule" id="MF_01341"/>
    </source>
</evidence>
<evidence type="ECO:0000256" key="2">
    <source>
        <dbReference type="SAM" id="MobiDB-lite"/>
    </source>
</evidence>
<evidence type="ECO:0000305" key="3"/>
<dbReference type="EMBL" id="CP000527">
    <property type="protein sequence ID" value="ABM28763.1"/>
    <property type="molecule type" value="Genomic_DNA"/>
</dbReference>
<dbReference type="RefSeq" id="WP_010938617.1">
    <property type="nucleotide sequence ID" value="NC_008751.1"/>
</dbReference>
<dbReference type="SMR" id="A1VE97"/>
<dbReference type="KEGG" id="dvl:Dvul_1746"/>
<dbReference type="HOGENOM" id="CLU_055188_4_2_7"/>
<dbReference type="Proteomes" id="UP000009173">
    <property type="component" value="Chromosome"/>
</dbReference>
<dbReference type="GO" id="GO:0022625">
    <property type="term" value="C:cytosolic large ribosomal subunit"/>
    <property type="evidence" value="ECO:0007669"/>
    <property type="project" value="TreeGrafter"/>
</dbReference>
<dbReference type="GO" id="GO:0019843">
    <property type="term" value="F:rRNA binding"/>
    <property type="evidence" value="ECO:0007669"/>
    <property type="project" value="UniProtKB-UniRule"/>
</dbReference>
<dbReference type="GO" id="GO:0003735">
    <property type="term" value="F:structural constituent of ribosome"/>
    <property type="evidence" value="ECO:0007669"/>
    <property type="project" value="InterPro"/>
</dbReference>
<dbReference type="GO" id="GO:0006412">
    <property type="term" value="P:translation"/>
    <property type="evidence" value="ECO:0007669"/>
    <property type="project" value="UniProtKB-UniRule"/>
</dbReference>
<dbReference type="Gene3D" id="3.100.10.10">
    <property type="match status" value="1"/>
</dbReference>
<dbReference type="HAMAP" id="MF_01341">
    <property type="entry name" value="Ribosomal_uL15"/>
    <property type="match status" value="1"/>
</dbReference>
<dbReference type="InterPro" id="IPR030878">
    <property type="entry name" value="Ribosomal_uL15"/>
</dbReference>
<dbReference type="InterPro" id="IPR021131">
    <property type="entry name" value="Ribosomal_uL15/eL18"/>
</dbReference>
<dbReference type="InterPro" id="IPR036227">
    <property type="entry name" value="Ribosomal_uL15/eL18_sf"/>
</dbReference>
<dbReference type="InterPro" id="IPR005749">
    <property type="entry name" value="Ribosomal_uL15_bac-type"/>
</dbReference>
<dbReference type="InterPro" id="IPR001196">
    <property type="entry name" value="Ribosomal_uL15_CS"/>
</dbReference>
<dbReference type="NCBIfam" id="TIGR01071">
    <property type="entry name" value="rplO_bact"/>
    <property type="match status" value="1"/>
</dbReference>
<dbReference type="PANTHER" id="PTHR12934">
    <property type="entry name" value="50S RIBOSOMAL PROTEIN L15"/>
    <property type="match status" value="1"/>
</dbReference>
<dbReference type="PANTHER" id="PTHR12934:SF11">
    <property type="entry name" value="LARGE RIBOSOMAL SUBUNIT PROTEIN UL15M"/>
    <property type="match status" value="1"/>
</dbReference>
<dbReference type="Pfam" id="PF00828">
    <property type="entry name" value="Ribosomal_L27A"/>
    <property type="match status" value="1"/>
</dbReference>
<dbReference type="SUPFAM" id="SSF52080">
    <property type="entry name" value="Ribosomal proteins L15p and L18e"/>
    <property type="match status" value="1"/>
</dbReference>
<dbReference type="PROSITE" id="PS00475">
    <property type="entry name" value="RIBOSOMAL_L15"/>
    <property type="match status" value="1"/>
</dbReference>
<accession>A1VE97</accession>
<gene>
    <name evidence="1" type="primary">rplO</name>
    <name type="ordered locus">Dvul_1746</name>
</gene>